<gene>
    <name evidence="1" type="primary">ruvB</name>
    <name type="ordered locus">Cthe_0182</name>
</gene>
<name>RUVB_ACET2</name>
<proteinExistence type="inferred from homology"/>
<organism>
    <name type="scientific">Acetivibrio thermocellus (strain ATCC 27405 / DSM 1237 / JCM 9322 / NBRC 103400 / NCIMB 10682 / NRRL B-4536 / VPI 7372)</name>
    <name type="common">Clostridium thermocellum</name>
    <dbReference type="NCBI Taxonomy" id="203119"/>
    <lineage>
        <taxon>Bacteria</taxon>
        <taxon>Bacillati</taxon>
        <taxon>Bacillota</taxon>
        <taxon>Clostridia</taxon>
        <taxon>Eubacteriales</taxon>
        <taxon>Oscillospiraceae</taxon>
        <taxon>Acetivibrio</taxon>
    </lineage>
</organism>
<protein>
    <recommendedName>
        <fullName evidence="1">Holliday junction branch migration complex subunit RuvB</fullName>
        <ecNumber evidence="1">3.6.4.-</ecNumber>
    </recommendedName>
</protein>
<comment type="function">
    <text evidence="1">The RuvA-RuvB-RuvC complex processes Holliday junction (HJ) DNA during genetic recombination and DNA repair, while the RuvA-RuvB complex plays an important role in the rescue of blocked DNA replication forks via replication fork reversal (RFR). RuvA specifically binds to HJ cruciform DNA, conferring on it an open structure. The RuvB hexamer acts as an ATP-dependent pump, pulling dsDNA into and through the RuvAB complex. RuvB forms 2 homohexamers on either side of HJ DNA bound by 1 or 2 RuvA tetramers; 4 subunits per hexamer contact DNA at a time. Coordinated motions by a converter formed by DNA-disengaged RuvB subunits stimulates ATP hydrolysis and nucleotide exchange. Immobilization of the converter enables RuvB to convert the ATP-contained energy into a lever motion, pulling 2 nucleotides of DNA out of the RuvA tetramer per ATP hydrolyzed, thus driving DNA branch migration. The RuvB motors rotate together with the DNA substrate, which together with the progressing nucleotide cycle form the mechanistic basis for DNA recombination by continuous HJ branch migration. Branch migration allows RuvC to scan DNA until it finds its consensus sequence, where it cleaves and resolves cruciform DNA.</text>
</comment>
<comment type="catalytic activity">
    <reaction evidence="1">
        <text>ATP + H2O = ADP + phosphate + H(+)</text>
        <dbReference type="Rhea" id="RHEA:13065"/>
        <dbReference type="ChEBI" id="CHEBI:15377"/>
        <dbReference type="ChEBI" id="CHEBI:15378"/>
        <dbReference type="ChEBI" id="CHEBI:30616"/>
        <dbReference type="ChEBI" id="CHEBI:43474"/>
        <dbReference type="ChEBI" id="CHEBI:456216"/>
    </reaction>
</comment>
<comment type="subunit">
    <text evidence="1">Homohexamer. Forms an RuvA(8)-RuvB(12)-Holliday junction (HJ) complex. HJ DNA is sandwiched between 2 RuvA tetramers; dsDNA enters through RuvA and exits via RuvB. An RuvB hexamer assembles on each DNA strand where it exits the tetramer. Each RuvB hexamer is contacted by two RuvA subunits (via domain III) on 2 adjacent RuvB subunits; this complex drives branch migration. In the full resolvosome a probable DNA-RuvA(4)-RuvB(12)-RuvC(2) complex forms which resolves the HJ.</text>
</comment>
<comment type="subcellular location">
    <subcellularLocation>
        <location evidence="1">Cytoplasm</location>
    </subcellularLocation>
</comment>
<comment type="domain">
    <text evidence="1">Has 3 domains, the large (RuvB-L) and small ATPase (RuvB-S) domains and the C-terminal head (RuvB-H) domain. The head domain binds DNA, while the ATPase domains jointly bind ATP, ADP or are empty depending on the state of the subunit in the translocation cycle. During a single DNA translocation step the structure of each domain remains the same, but their relative positions change.</text>
</comment>
<comment type="similarity">
    <text evidence="1">Belongs to the RuvB family.</text>
</comment>
<dbReference type="EC" id="3.6.4.-" evidence="1"/>
<dbReference type="EMBL" id="CP000568">
    <property type="protein sequence ID" value="ABN51423.1"/>
    <property type="molecule type" value="Genomic_DNA"/>
</dbReference>
<dbReference type="RefSeq" id="WP_003512257.1">
    <property type="nucleotide sequence ID" value="NC_009012.1"/>
</dbReference>
<dbReference type="SMR" id="A3DBU4"/>
<dbReference type="STRING" id="203119.Cthe_0182"/>
<dbReference type="GeneID" id="35805064"/>
<dbReference type="KEGG" id="cth:Cthe_0182"/>
<dbReference type="eggNOG" id="COG2255">
    <property type="taxonomic scope" value="Bacteria"/>
</dbReference>
<dbReference type="HOGENOM" id="CLU_055599_1_0_9"/>
<dbReference type="OrthoDB" id="9804478at2"/>
<dbReference type="Proteomes" id="UP000002145">
    <property type="component" value="Chromosome"/>
</dbReference>
<dbReference type="GO" id="GO:0005737">
    <property type="term" value="C:cytoplasm"/>
    <property type="evidence" value="ECO:0007669"/>
    <property type="project" value="UniProtKB-SubCell"/>
</dbReference>
<dbReference type="GO" id="GO:0048476">
    <property type="term" value="C:Holliday junction resolvase complex"/>
    <property type="evidence" value="ECO:0007669"/>
    <property type="project" value="UniProtKB-UniRule"/>
</dbReference>
<dbReference type="GO" id="GO:0005524">
    <property type="term" value="F:ATP binding"/>
    <property type="evidence" value="ECO:0007669"/>
    <property type="project" value="UniProtKB-UniRule"/>
</dbReference>
<dbReference type="GO" id="GO:0016887">
    <property type="term" value="F:ATP hydrolysis activity"/>
    <property type="evidence" value="ECO:0007669"/>
    <property type="project" value="InterPro"/>
</dbReference>
<dbReference type="GO" id="GO:0000400">
    <property type="term" value="F:four-way junction DNA binding"/>
    <property type="evidence" value="ECO:0007669"/>
    <property type="project" value="UniProtKB-UniRule"/>
</dbReference>
<dbReference type="GO" id="GO:0009378">
    <property type="term" value="F:four-way junction helicase activity"/>
    <property type="evidence" value="ECO:0007669"/>
    <property type="project" value="InterPro"/>
</dbReference>
<dbReference type="GO" id="GO:0006310">
    <property type="term" value="P:DNA recombination"/>
    <property type="evidence" value="ECO:0007669"/>
    <property type="project" value="UniProtKB-UniRule"/>
</dbReference>
<dbReference type="GO" id="GO:0006281">
    <property type="term" value="P:DNA repair"/>
    <property type="evidence" value="ECO:0007669"/>
    <property type="project" value="UniProtKB-UniRule"/>
</dbReference>
<dbReference type="CDD" id="cd00009">
    <property type="entry name" value="AAA"/>
    <property type="match status" value="1"/>
</dbReference>
<dbReference type="Gene3D" id="1.10.8.60">
    <property type="match status" value="1"/>
</dbReference>
<dbReference type="Gene3D" id="3.40.50.300">
    <property type="entry name" value="P-loop containing nucleotide triphosphate hydrolases"/>
    <property type="match status" value="1"/>
</dbReference>
<dbReference type="Gene3D" id="1.10.10.10">
    <property type="entry name" value="Winged helix-like DNA-binding domain superfamily/Winged helix DNA-binding domain"/>
    <property type="match status" value="1"/>
</dbReference>
<dbReference type="HAMAP" id="MF_00016">
    <property type="entry name" value="DNA_HJ_migration_RuvB"/>
    <property type="match status" value="1"/>
</dbReference>
<dbReference type="InterPro" id="IPR003593">
    <property type="entry name" value="AAA+_ATPase"/>
</dbReference>
<dbReference type="InterPro" id="IPR041445">
    <property type="entry name" value="AAA_lid_4"/>
</dbReference>
<dbReference type="InterPro" id="IPR004605">
    <property type="entry name" value="DNA_helicase_Holl-junc_RuvB"/>
</dbReference>
<dbReference type="InterPro" id="IPR027417">
    <property type="entry name" value="P-loop_NTPase"/>
</dbReference>
<dbReference type="InterPro" id="IPR008824">
    <property type="entry name" value="RuvB-like_N"/>
</dbReference>
<dbReference type="InterPro" id="IPR008823">
    <property type="entry name" value="RuvB_C"/>
</dbReference>
<dbReference type="InterPro" id="IPR036388">
    <property type="entry name" value="WH-like_DNA-bd_sf"/>
</dbReference>
<dbReference type="InterPro" id="IPR036390">
    <property type="entry name" value="WH_DNA-bd_sf"/>
</dbReference>
<dbReference type="NCBIfam" id="NF000868">
    <property type="entry name" value="PRK00080.1"/>
    <property type="match status" value="1"/>
</dbReference>
<dbReference type="NCBIfam" id="TIGR00635">
    <property type="entry name" value="ruvB"/>
    <property type="match status" value="1"/>
</dbReference>
<dbReference type="PANTHER" id="PTHR42848">
    <property type="match status" value="1"/>
</dbReference>
<dbReference type="PANTHER" id="PTHR42848:SF1">
    <property type="entry name" value="HOLLIDAY JUNCTION BRANCH MIGRATION COMPLEX SUBUNIT RUVB"/>
    <property type="match status" value="1"/>
</dbReference>
<dbReference type="Pfam" id="PF17864">
    <property type="entry name" value="AAA_lid_4"/>
    <property type="match status" value="1"/>
</dbReference>
<dbReference type="Pfam" id="PF05491">
    <property type="entry name" value="RuvB_C"/>
    <property type="match status" value="1"/>
</dbReference>
<dbReference type="Pfam" id="PF05496">
    <property type="entry name" value="RuvB_N"/>
    <property type="match status" value="1"/>
</dbReference>
<dbReference type="SMART" id="SM00382">
    <property type="entry name" value="AAA"/>
    <property type="match status" value="1"/>
</dbReference>
<dbReference type="SUPFAM" id="SSF52540">
    <property type="entry name" value="P-loop containing nucleoside triphosphate hydrolases"/>
    <property type="match status" value="1"/>
</dbReference>
<dbReference type="SUPFAM" id="SSF46785">
    <property type="entry name" value="Winged helix' DNA-binding domain"/>
    <property type="match status" value="1"/>
</dbReference>
<reference key="1">
    <citation type="submission" date="2007-02" db="EMBL/GenBank/DDBJ databases">
        <title>Complete sequence of Clostridium thermocellum ATCC 27405.</title>
        <authorList>
            <consortium name="US DOE Joint Genome Institute"/>
            <person name="Copeland A."/>
            <person name="Lucas S."/>
            <person name="Lapidus A."/>
            <person name="Barry K."/>
            <person name="Detter J.C."/>
            <person name="Glavina del Rio T."/>
            <person name="Hammon N."/>
            <person name="Israni S."/>
            <person name="Dalin E."/>
            <person name="Tice H."/>
            <person name="Pitluck S."/>
            <person name="Chertkov O."/>
            <person name="Brettin T."/>
            <person name="Bruce D."/>
            <person name="Han C."/>
            <person name="Tapia R."/>
            <person name="Gilna P."/>
            <person name="Schmutz J."/>
            <person name="Larimer F."/>
            <person name="Land M."/>
            <person name="Hauser L."/>
            <person name="Kyrpides N."/>
            <person name="Mikhailova N."/>
            <person name="Wu J.H.D."/>
            <person name="Newcomb M."/>
            <person name="Richardson P."/>
        </authorList>
    </citation>
    <scope>NUCLEOTIDE SEQUENCE [LARGE SCALE GENOMIC DNA]</scope>
    <source>
        <strain>ATCC 27405 / DSM 1237 / JCM 9322 / NBRC 103400 / NCIMB 10682 / NRRL B-4536 / VPI 7372</strain>
    </source>
</reference>
<sequence>MEDRLVGCRLSEEDVDEVSLRPRKFGEYIGQTKVKENLMVFIEAAKKRNEALDHVLLYGPPGLGKTTLAGIIASELGVNLRITSGPAIEKPGDLAAILTNLGNFDVLFIDEIHRLNRSVEEILYPAMEDYALDIIIGKGPSARSIRLDLPKFTLIGATTRAGLLTSPLRDRFGVINKLELYSVEELGQIVKRSARILNVGIEDEAAEEIARRARGTPRVANRILKRIRDFAQVKSDGFITKEIARTGLEALEVDEIGLDAVDRNLLMSIIEKFGGGPVGLDTLAATIGEEPDTIEDVYEPYLLQLGFINKTPRGRMATKLAYEHFGLKYE</sequence>
<accession>A3DBU4</accession>
<feature type="chain" id="PRO_1000001395" description="Holliday junction branch migration complex subunit RuvB">
    <location>
        <begin position="1"/>
        <end position="330"/>
    </location>
</feature>
<feature type="region of interest" description="Large ATPase domain (RuvB-L)" evidence="1">
    <location>
        <begin position="1"/>
        <end position="181"/>
    </location>
</feature>
<feature type="region of interest" description="Small ATPAse domain (RuvB-S)" evidence="1">
    <location>
        <begin position="182"/>
        <end position="252"/>
    </location>
</feature>
<feature type="region of interest" description="Head domain (RuvB-H)" evidence="1">
    <location>
        <begin position="255"/>
        <end position="330"/>
    </location>
</feature>
<feature type="binding site" evidence="1">
    <location>
        <position position="20"/>
    </location>
    <ligand>
        <name>ATP</name>
        <dbReference type="ChEBI" id="CHEBI:30616"/>
    </ligand>
</feature>
<feature type="binding site" evidence="1">
    <location>
        <position position="21"/>
    </location>
    <ligand>
        <name>ATP</name>
        <dbReference type="ChEBI" id="CHEBI:30616"/>
    </ligand>
</feature>
<feature type="binding site" evidence="1">
    <location>
        <position position="62"/>
    </location>
    <ligand>
        <name>ATP</name>
        <dbReference type="ChEBI" id="CHEBI:30616"/>
    </ligand>
</feature>
<feature type="binding site" evidence="1">
    <location>
        <position position="65"/>
    </location>
    <ligand>
        <name>ATP</name>
        <dbReference type="ChEBI" id="CHEBI:30616"/>
    </ligand>
</feature>
<feature type="binding site" evidence="1">
    <location>
        <position position="66"/>
    </location>
    <ligand>
        <name>ATP</name>
        <dbReference type="ChEBI" id="CHEBI:30616"/>
    </ligand>
</feature>
<feature type="binding site" evidence="1">
    <location>
        <position position="66"/>
    </location>
    <ligand>
        <name>Mg(2+)</name>
        <dbReference type="ChEBI" id="CHEBI:18420"/>
    </ligand>
</feature>
<feature type="binding site" evidence="1">
    <location>
        <position position="67"/>
    </location>
    <ligand>
        <name>ATP</name>
        <dbReference type="ChEBI" id="CHEBI:30616"/>
    </ligand>
</feature>
<feature type="binding site" evidence="1">
    <location>
        <begin position="128"/>
        <end position="130"/>
    </location>
    <ligand>
        <name>ATP</name>
        <dbReference type="ChEBI" id="CHEBI:30616"/>
    </ligand>
</feature>
<feature type="binding site" evidence="1">
    <location>
        <position position="171"/>
    </location>
    <ligand>
        <name>ATP</name>
        <dbReference type="ChEBI" id="CHEBI:30616"/>
    </ligand>
</feature>
<feature type="binding site" evidence="1">
    <location>
        <position position="181"/>
    </location>
    <ligand>
        <name>ATP</name>
        <dbReference type="ChEBI" id="CHEBI:30616"/>
    </ligand>
</feature>
<feature type="binding site" evidence="1">
    <location>
        <position position="218"/>
    </location>
    <ligand>
        <name>ATP</name>
        <dbReference type="ChEBI" id="CHEBI:30616"/>
    </ligand>
</feature>
<feature type="binding site" evidence="1">
    <location>
        <position position="310"/>
    </location>
    <ligand>
        <name>DNA</name>
        <dbReference type="ChEBI" id="CHEBI:16991"/>
    </ligand>
</feature>
<feature type="binding site" evidence="1">
    <location>
        <position position="315"/>
    </location>
    <ligand>
        <name>DNA</name>
        <dbReference type="ChEBI" id="CHEBI:16991"/>
    </ligand>
</feature>
<evidence type="ECO:0000255" key="1">
    <source>
        <dbReference type="HAMAP-Rule" id="MF_00016"/>
    </source>
</evidence>
<keyword id="KW-0067">ATP-binding</keyword>
<keyword id="KW-0963">Cytoplasm</keyword>
<keyword id="KW-0227">DNA damage</keyword>
<keyword id="KW-0233">DNA recombination</keyword>
<keyword id="KW-0234">DNA repair</keyword>
<keyword id="KW-0238">DNA-binding</keyword>
<keyword id="KW-0378">Hydrolase</keyword>
<keyword id="KW-0547">Nucleotide-binding</keyword>
<keyword id="KW-1185">Reference proteome</keyword>